<sequence>MSWLSKLMPSGIRTENTPAKKRSVPEGLWEKCSNCGSALYGPELEENLEVCPKCDHHMAIRARARLNSLFDPDTATTEIAAQLGPVDALKFKDQKRYGERIKASQKASGEYDALIAMRGTLKGNPLVAAAFDFAFMGGSMGSVVGERFARAAEVALEVGCPFVCFSASGGARMQEGLFSLMQMAKTSAALGRLREAGLPYISVLTHPTTGGVSASFAMLGDINIAEPHALIGFAGPRVIEQTVRETLPEGFQRSEFLLDHGAIDQICDRHQLRDRIAELTAMMMRQPHPQDADAA</sequence>
<name>ACCD_XANE5</name>
<accession>Q3BRL8</accession>
<protein>
    <recommendedName>
        <fullName evidence="1">Acetyl-coenzyme A carboxylase carboxyl transferase subunit beta</fullName>
        <shortName evidence="1">ACCase subunit beta</shortName>
        <shortName evidence="1">Acetyl-CoA carboxylase carboxyltransferase subunit beta</shortName>
        <ecNumber evidence="1">2.1.3.15</ecNumber>
    </recommendedName>
</protein>
<evidence type="ECO:0000255" key="1">
    <source>
        <dbReference type="HAMAP-Rule" id="MF_01395"/>
    </source>
</evidence>
<evidence type="ECO:0000255" key="2">
    <source>
        <dbReference type="PROSITE-ProRule" id="PRU01136"/>
    </source>
</evidence>
<evidence type="ECO:0000256" key="3">
    <source>
        <dbReference type="SAM" id="MobiDB-lite"/>
    </source>
</evidence>
<evidence type="ECO:0000305" key="4"/>
<reference key="1">
    <citation type="journal article" date="2005" name="J. Bacteriol.">
        <title>Insights into genome plasticity and pathogenicity of the plant pathogenic Bacterium Xanthomonas campestris pv. vesicatoria revealed by the complete genome sequence.</title>
        <authorList>
            <person name="Thieme F."/>
            <person name="Koebnik R."/>
            <person name="Bekel T."/>
            <person name="Berger C."/>
            <person name="Boch J."/>
            <person name="Buettner D."/>
            <person name="Caldana C."/>
            <person name="Gaigalat L."/>
            <person name="Goesmann A."/>
            <person name="Kay S."/>
            <person name="Kirchner O."/>
            <person name="Lanz C."/>
            <person name="Linke B."/>
            <person name="McHardy A.C."/>
            <person name="Meyer F."/>
            <person name="Mittenhuber G."/>
            <person name="Nies D.H."/>
            <person name="Niesbach-Kloesgen U."/>
            <person name="Patschkowski T."/>
            <person name="Rueckert C."/>
            <person name="Rupp O."/>
            <person name="Schneiker S."/>
            <person name="Schuster S.C."/>
            <person name="Vorhoelter F.J."/>
            <person name="Weber E."/>
            <person name="Puehler A."/>
            <person name="Bonas U."/>
            <person name="Bartels D."/>
            <person name="Kaiser O."/>
        </authorList>
    </citation>
    <scope>NUCLEOTIDE SEQUENCE [LARGE SCALE GENOMIC DNA]</scope>
    <source>
        <strain>85-10</strain>
    </source>
</reference>
<gene>
    <name evidence="1" type="primary">accD</name>
    <name type="ordered locus">XCV2864</name>
</gene>
<comment type="function">
    <text evidence="1">Component of the acetyl coenzyme A carboxylase (ACC) complex. Biotin carboxylase (BC) catalyzes the carboxylation of biotin on its carrier protein (BCCP) and then the CO(2) group is transferred by the transcarboxylase to acetyl-CoA to form malonyl-CoA.</text>
</comment>
<comment type="catalytic activity">
    <reaction evidence="1">
        <text>N(6)-carboxybiotinyl-L-lysyl-[protein] + acetyl-CoA = N(6)-biotinyl-L-lysyl-[protein] + malonyl-CoA</text>
        <dbReference type="Rhea" id="RHEA:54728"/>
        <dbReference type="Rhea" id="RHEA-COMP:10505"/>
        <dbReference type="Rhea" id="RHEA-COMP:10506"/>
        <dbReference type="ChEBI" id="CHEBI:57288"/>
        <dbReference type="ChEBI" id="CHEBI:57384"/>
        <dbReference type="ChEBI" id="CHEBI:83144"/>
        <dbReference type="ChEBI" id="CHEBI:83145"/>
        <dbReference type="EC" id="2.1.3.15"/>
    </reaction>
</comment>
<comment type="cofactor">
    <cofactor evidence="1">
        <name>Zn(2+)</name>
        <dbReference type="ChEBI" id="CHEBI:29105"/>
    </cofactor>
    <text evidence="1">Binds 1 zinc ion per subunit.</text>
</comment>
<comment type="pathway">
    <text evidence="1">Lipid metabolism; malonyl-CoA biosynthesis; malonyl-CoA from acetyl-CoA: step 1/1.</text>
</comment>
<comment type="subunit">
    <text evidence="1">Acetyl-CoA carboxylase is a heterohexamer composed of biotin carboxyl carrier protein (AccB), biotin carboxylase (AccC) and two subunits each of ACCase subunit alpha (AccA) and ACCase subunit beta (AccD).</text>
</comment>
<comment type="subcellular location">
    <subcellularLocation>
        <location evidence="1">Cytoplasm</location>
    </subcellularLocation>
</comment>
<comment type="similarity">
    <text evidence="1">Belongs to the AccD/PCCB family.</text>
</comment>
<comment type="sequence caution" evidence="4">
    <conflict type="erroneous initiation">
        <sequence resource="EMBL-CDS" id="CAJ24543"/>
    </conflict>
    <text>Extended N-terminus.</text>
</comment>
<feature type="chain" id="PRO_0000359099" description="Acetyl-coenzyme A carboxylase carboxyl transferase subunit beta">
    <location>
        <begin position="1"/>
        <end position="295"/>
    </location>
</feature>
<feature type="domain" description="CoA carboxyltransferase N-terminal" evidence="2">
    <location>
        <begin position="28"/>
        <end position="295"/>
    </location>
</feature>
<feature type="zinc finger region" description="C4-type" evidence="1">
    <location>
        <begin position="32"/>
        <end position="54"/>
    </location>
</feature>
<feature type="region of interest" description="Disordered" evidence="3">
    <location>
        <begin position="1"/>
        <end position="20"/>
    </location>
</feature>
<feature type="binding site" evidence="1">
    <location>
        <position position="32"/>
    </location>
    <ligand>
        <name>Zn(2+)</name>
        <dbReference type="ChEBI" id="CHEBI:29105"/>
    </ligand>
</feature>
<feature type="binding site" evidence="1">
    <location>
        <position position="35"/>
    </location>
    <ligand>
        <name>Zn(2+)</name>
        <dbReference type="ChEBI" id="CHEBI:29105"/>
    </ligand>
</feature>
<feature type="binding site" evidence="1">
    <location>
        <position position="51"/>
    </location>
    <ligand>
        <name>Zn(2+)</name>
        <dbReference type="ChEBI" id="CHEBI:29105"/>
    </ligand>
</feature>
<feature type="binding site" evidence="1">
    <location>
        <position position="54"/>
    </location>
    <ligand>
        <name>Zn(2+)</name>
        <dbReference type="ChEBI" id="CHEBI:29105"/>
    </ligand>
</feature>
<keyword id="KW-0067">ATP-binding</keyword>
<keyword id="KW-0963">Cytoplasm</keyword>
<keyword id="KW-0275">Fatty acid biosynthesis</keyword>
<keyword id="KW-0276">Fatty acid metabolism</keyword>
<keyword id="KW-0444">Lipid biosynthesis</keyword>
<keyword id="KW-0443">Lipid metabolism</keyword>
<keyword id="KW-0479">Metal-binding</keyword>
<keyword id="KW-0547">Nucleotide-binding</keyword>
<keyword id="KW-0808">Transferase</keyword>
<keyword id="KW-0862">Zinc</keyword>
<keyword id="KW-0863">Zinc-finger</keyword>
<organism>
    <name type="scientific">Xanthomonas euvesicatoria pv. vesicatoria (strain 85-10)</name>
    <name type="common">Xanthomonas campestris pv. vesicatoria</name>
    <dbReference type="NCBI Taxonomy" id="316273"/>
    <lineage>
        <taxon>Bacteria</taxon>
        <taxon>Pseudomonadati</taxon>
        <taxon>Pseudomonadota</taxon>
        <taxon>Gammaproteobacteria</taxon>
        <taxon>Lysobacterales</taxon>
        <taxon>Lysobacteraceae</taxon>
        <taxon>Xanthomonas</taxon>
    </lineage>
</organism>
<dbReference type="EC" id="2.1.3.15" evidence="1"/>
<dbReference type="EMBL" id="AM039952">
    <property type="protein sequence ID" value="CAJ24543.1"/>
    <property type="status" value="ALT_INIT"/>
    <property type="molecule type" value="Genomic_DNA"/>
</dbReference>
<dbReference type="RefSeq" id="WP_011347949.1">
    <property type="nucleotide sequence ID" value="NZ_CP017190.1"/>
</dbReference>
<dbReference type="SMR" id="Q3BRL8"/>
<dbReference type="STRING" id="456327.BJD11_08540"/>
<dbReference type="KEGG" id="xcv:XCV2864"/>
<dbReference type="eggNOG" id="COG0777">
    <property type="taxonomic scope" value="Bacteria"/>
</dbReference>
<dbReference type="HOGENOM" id="CLU_015486_1_0_6"/>
<dbReference type="UniPathway" id="UPA00655">
    <property type="reaction ID" value="UER00711"/>
</dbReference>
<dbReference type="Proteomes" id="UP000007069">
    <property type="component" value="Chromosome"/>
</dbReference>
<dbReference type="GO" id="GO:0009329">
    <property type="term" value="C:acetate CoA-transferase complex"/>
    <property type="evidence" value="ECO:0007669"/>
    <property type="project" value="TreeGrafter"/>
</dbReference>
<dbReference type="GO" id="GO:0003989">
    <property type="term" value="F:acetyl-CoA carboxylase activity"/>
    <property type="evidence" value="ECO:0007669"/>
    <property type="project" value="InterPro"/>
</dbReference>
<dbReference type="GO" id="GO:0005524">
    <property type="term" value="F:ATP binding"/>
    <property type="evidence" value="ECO:0007669"/>
    <property type="project" value="UniProtKB-KW"/>
</dbReference>
<dbReference type="GO" id="GO:0016743">
    <property type="term" value="F:carboxyl- or carbamoyltransferase activity"/>
    <property type="evidence" value="ECO:0007669"/>
    <property type="project" value="UniProtKB-UniRule"/>
</dbReference>
<dbReference type="GO" id="GO:0008270">
    <property type="term" value="F:zinc ion binding"/>
    <property type="evidence" value="ECO:0007669"/>
    <property type="project" value="UniProtKB-UniRule"/>
</dbReference>
<dbReference type="GO" id="GO:0006633">
    <property type="term" value="P:fatty acid biosynthetic process"/>
    <property type="evidence" value="ECO:0007669"/>
    <property type="project" value="UniProtKB-KW"/>
</dbReference>
<dbReference type="GO" id="GO:2001295">
    <property type="term" value="P:malonyl-CoA biosynthetic process"/>
    <property type="evidence" value="ECO:0007669"/>
    <property type="project" value="UniProtKB-UniRule"/>
</dbReference>
<dbReference type="Gene3D" id="3.90.226.10">
    <property type="entry name" value="2-enoyl-CoA Hydratase, Chain A, domain 1"/>
    <property type="match status" value="1"/>
</dbReference>
<dbReference type="HAMAP" id="MF_01395">
    <property type="entry name" value="AcetylCoA_CT_beta"/>
    <property type="match status" value="1"/>
</dbReference>
<dbReference type="InterPro" id="IPR034733">
    <property type="entry name" value="AcCoA_carboxyl_beta"/>
</dbReference>
<dbReference type="InterPro" id="IPR000438">
    <property type="entry name" value="Acetyl_CoA_COase_Trfase_b_su"/>
</dbReference>
<dbReference type="InterPro" id="IPR029045">
    <property type="entry name" value="ClpP/crotonase-like_dom_sf"/>
</dbReference>
<dbReference type="InterPro" id="IPR011762">
    <property type="entry name" value="COA_CT_N"/>
</dbReference>
<dbReference type="InterPro" id="IPR041010">
    <property type="entry name" value="Znf-ACC"/>
</dbReference>
<dbReference type="NCBIfam" id="TIGR00515">
    <property type="entry name" value="accD"/>
    <property type="match status" value="1"/>
</dbReference>
<dbReference type="PANTHER" id="PTHR42995">
    <property type="entry name" value="ACETYL-COENZYME A CARBOXYLASE CARBOXYL TRANSFERASE SUBUNIT BETA, CHLOROPLASTIC"/>
    <property type="match status" value="1"/>
</dbReference>
<dbReference type="PANTHER" id="PTHR42995:SF5">
    <property type="entry name" value="ACETYL-COENZYME A CARBOXYLASE CARBOXYL TRANSFERASE SUBUNIT BETA, CHLOROPLASTIC"/>
    <property type="match status" value="1"/>
</dbReference>
<dbReference type="Pfam" id="PF01039">
    <property type="entry name" value="Carboxyl_trans"/>
    <property type="match status" value="1"/>
</dbReference>
<dbReference type="Pfam" id="PF17848">
    <property type="entry name" value="Zn_ribbon_ACC"/>
    <property type="match status" value="1"/>
</dbReference>
<dbReference type="PRINTS" id="PR01070">
    <property type="entry name" value="ACCCTRFRASEB"/>
</dbReference>
<dbReference type="SUPFAM" id="SSF52096">
    <property type="entry name" value="ClpP/crotonase"/>
    <property type="match status" value="1"/>
</dbReference>
<dbReference type="PROSITE" id="PS50980">
    <property type="entry name" value="COA_CT_NTER"/>
    <property type="match status" value="1"/>
</dbReference>
<proteinExistence type="inferred from homology"/>